<feature type="chain" id="PRO_0000403694" description="4-hydroxyphenylacetate decarboxylase small subunit">
    <location>
        <begin position="1"/>
        <end position="85"/>
    </location>
</feature>
<feature type="binding site" evidence="1">
    <location>
        <position position="4"/>
    </location>
    <ligand>
        <name>[4Fe-4S] cluster</name>
        <dbReference type="ChEBI" id="CHEBI:49883"/>
        <label>1</label>
    </ligand>
</feature>
<feature type="binding site" evidence="1">
    <location>
        <position position="7"/>
    </location>
    <ligand>
        <name>[4Fe-4S] cluster</name>
        <dbReference type="ChEBI" id="CHEBI:49883"/>
        <label>1</label>
    </ligand>
</feature>
<feature type="binding site" evidence="1">
    <location>
        <position position="20"/>
    </location>
    <ligand>
        <name>[4Fe-4S] cluster</name>
        <dbReference type="ChEBI" id="CHEBI:49883"/>
        <label>1</label>
    </ligand>
</feature>
<feature type="binding site" evidence="1">
    <location>
        <position position="34"/>
    </location>
    <ligand>
        <name>[4Fe-4S] cluster</name>
        <dbReference type="ChEBI" id="CHEBI:49883"/>
        <label>1</label>
    </ligand>
</feature>
<feature type="binding site" evidence="1">
    <location>
        <position position="43"/>
    </location>
    <ligand>
        <name>[4Fe-4S] cluster</name>
        <dbReference type="ChEBI" id="CHEBI:49883"/>
        <label>2</label>
    </ligand>
</feature>
<feature type="binding site" evidence="1">
    <location>
        <position position="46"/>
    </location>
    <ligand>
        <name>[4Fe-4S] cluster</name>
        <dbReference type="ChEBI" id="CHEBI:49883"/>
        <label>2</label>
    </ligand>
</feature>
<feature type="binding site" evidence="1">
    <location>
        <position position="60"/>
    </location>
    <ligand>
        <name>[4Fe-4S] cluster</name>
        <dbReference type="ChEBI" id="CHEBI:49883"/>
        <label>2</label>
    </ligand>
</feature>
<feature type="binding site" evidence="1">
    <location>
        <position position="78"/>
    </location>
    <ligand>
        <name>[4Fe-4S] cluster</name>
        <dbReference type="ChEBI" id="CHEBI:49883"/>
        <label>2</label>
    </ligand>
</feature>
<proteinExistence type="evidence at protein level"/>
<gene>
    <name evidence="10" type="primary">hpdC</name>
</gene>
<comment type="function">
    <text evidence="2 4">Component of the HPA decarboxylase that decarboxylates phenylacetates with a hydroxyl group in the p-position. Active toward 4-hydroxyphenylacetate, 3,4-dihydroxyphenylacetate and to a lesser extent p-hydroxymandelate (2-hydroxy-2-(4-hydroxyphenyl)acetate), forming 4-methylphenol, 4-methylcatechol and 4-hydroxybenzylalcohol, respectively. Is likely involved in the catabolism of aromatic amino acids such as tyrosine fermentation. 4-methylphenol (p-cresol) formation provides metabolic toxicity, which may benefit the pathogen C.difficile by suppression of the endogenous gastrointestinal microflora, allowing the development of gastrointestinal infections. The small subunit is essential for enzymatic activity of HPA decarboxylase, and also seems to be involved in the regulation of the enzyme oligomeric state and catalytic activity.</text>
</comment>
<comment type="catalytic activity">
    <reaction evidence="2 4">
        <text>4-hydroxyphenylacetate + H(+) = 4-methylphenol + CO2</text>
        <dbReference type="Rhea" id="RHEA:22732"/>
        <dbReference type="ChEBI" id="CHEBI:15378"/>
        <dbReference type="ChEBI" id="CHEBI:16526"/>
        <dbReference type="ChEBI" id="CHEBI:17847"/>
        <dbReference type="ChEBI" id="CHEBI:48999"/>
        <dbReference type="EC" id="4.1.1.83"/>
    </reaction>
    <physiologicalReaction direction="left-to-right" evidence="8 9">
        <dbReference type="Rhea" id="RHEA:22733"/>
    </physiologicalReaction>
</comment>
<comment type="catalytic activity">
    <reaction evidence="2 4">
        <text>3,4-dihydroxyphenylacetate + H(+) = 4-methylcatechol + CO2</text>
        <dbReference type="Rhea" id="RHEA:62556"/>
        <dbReference type="ChEBI" id="CHEBI:15378"/>
        <dbReference type="ChEBI" id="CHEBI:16526"/>
        <dbReference type="ChEBI" id="CHEBI:17254"/>
        <dbReference type="ChEBI" id="CHEBI:17612"/>
        <dbReference type="EC" id="4.1.1.83"/>
    </reaction>
    <physiologicalReaction direction="left-to-right" evidence="8 9">
        <dbReference type="Rhea" id="RHEA:62557"/>
    </physiologicalReaction>
</comment>
<comment type="catalytic activity">
    <reaction evidence="2">
        <text>2-hydroxy-2-(4-hydroxyphenyl)acetate + H(+) = 4-hydroxybenzyl alcohol + CO2</text>
        <dbReference type="Rhea" id="RHEA:62588"/>
        <dbReference type="ChEBI" id="CHEBI:15378"/>
        <dbReference type="ChEBI" id="CHEBI:16526"/>
        <dbReference type="ChEBI" id="CHEBI:32804"/>
        <dbReference type="ChEBI" id="CHEBI:67410"/>
    </reaction>
    <physiologicalReaction direction="left-to-right" evidence="8">
        <dbReference type="Rhea" id="RHEA:62589"/>
    </physiologicalReaction>
</comment>
<comment type="cofactor">
    <cofactor evidence="4">
        <name>[4Fe-4S] cluster</name>
        <dbReference type="ChEBI" id="CHEBI:49883"/>
    </cofactor>
    <text evidence="4">Binds 2 [4Fe-4S] clusters per subunit.</text>
</comment>
<comment type="activity regulation">
    <text evidence="2">Enzyme activity catalyzed by the HPA decarboxylase complex is rapidly and irreversibly inactivated by oxygen. Competitively inhibited by p-hydroxyphenylacetamide. Not inhibited by m- or o-hydroxyphenyl-acetate, p-hydroxybenzoate or p-hydroxyphenylpropionate.</text>
</comment>
<comment type="biophysicochemical properties">
    <phDependence>
        <text evidence="2">Optimum pH is 7.0.</text>
    </phDependence>
    <temperatureDependence>
        <text evidence="2">Has a half-life of 15 minutes at 30 degrees Celsius.</text>
    </temperatureDependence>
</comment>
<comment type="subunit">
    <text evidence="3 4">Heterooctamer consisting of 4 large (HpdB) subunits and 4 small (HpdC) subunits.</text>
</comment>
<comment type="similarity">
    <text evidence="7">Belongs to the HPA decarboxylase small subunit family.</text>
</comment>
<reference key="1">
    <citation type="journal article" date="2004" name="Eur. J. Biochem.">
        <title>Subunit composition of the glycyl radical enzyme p-hydroxyphenylacetate decarboxylase. A small subunit, HpdC, is essential for catalytic activity.</title>
        <authorList>
            <person name="Andrei P.I."/>
            <person name="Pierik A.J."/>
            <person name="Zauner S."/>
            <person name="Andrei-Selmer L.C."/>
            <person name="Selmer T."/>
        </authorList>
    </citation>
    <scope>NUCLEOTIDE SEQUENCE [GENOMIC DNA]</scope>
    <scope>SUBUNIT</scope>
    <source>
        <strain evidence="10">ATCC 9689 / DSM 1296 / BCRC 10642 / JCM 1296 / NCIMB 10666 / NCTC 11209 / 90556-M6S</strain>
    </source>
</reference>
<reference key="2">
    <citation type="journal article" date="2001" name="Eur. J. Biochem.">
        <title>p-Hydroxyphenylacetate decarboxylase from Clostridium difficile. A novel glycyl radical enzyme catalysing the formation of p-cresol.</title>
        <authorList>
            <person name="Selmer T."/>
            <person name="Andrei P.I."/>
        </authorList>
    </citation>
    <scope>FUNCTION</scope>
    <scope>CATALYTIC ACTIVITY</scope>
    <scope>BIOPHYSICOCHEMICAL PROPERTIES</scope>
    <scope>ACTIVITY REGULATION</scope>
    <scope>REACTION MECHANISM</scope>
    <source>
        <strain evidence="2">ATCC 9689 / DSM 1296 / BCRC 10642 / JCM 1296 / NCIMB 10666 / NCTC 11209 / 90556-M6S</strain>
    </source>
</reference>
<reference key="3">
    <citation type="journal article" date="2006" name="Biochemistry">
        <title>4-Hydroxyphenylacetate decarboxylases: properties of a novel subclass of glycyl radical enzyme systems.</title>
        <authorList>
            <person name="Yu L."/>
            <person name="Blaser M."/>
            <person name="Andrei P.I."/>
            <person name="Pierik A.J."/>
            <person name="Selmer T."/>
        </authorList>
    </citation>
    <scope>FUNCTION</scope>
    <scope>CATALYTIC ACTIVITY</scope>
    <scope>COFACTOR</scope>
    <scope>SUBUNIT</scope>
    <source>
        <strain evidence="4">ATCC 9689 / DSM 1296 / BCRC 10642 / JCM 1296 / NCIMB 10666 / NCTC 11209 / 90556-M6S</strain>
    </source>
</reference>
<dbReference type="EC" id="4.1.1.83" evidence="2 4"/>
<dbReference type="EMBL" id="AJ543426">
    <property type="protein sequence ID" value="CAD65890.1"/>
    <property type="molecule type" value="Genomic_DNA"/>
</dbReference>
<dbReference type="RefSeq" id="WP_003425410.1">
    <property type="nucleotide sequence ID" value="NZ_WBMC01000010.1"/>
</dbReference>
<dbReference type="SMR" id="Q84F15"/>
<dbReference type="GeneID" id="66352701"/>
<dbReference type="KEGG" id="ag:CAD65890"/>
<dbReference type="BioCyc" id="MetaCyc:MONOMER-18508"/>
<dbReference type="BRENDA" id="4.1.1.83">
    <property type="organism ID" value="1473"/>
</dbReference>
<dbReference type="SABIO-RK" id="Q84F15"/>
<dbReference type="GO" id="GO:0051539">
    <property type="term" value="F:4 iron, 4 sulfur cluster binding"/>
    <property type="evidence" value="ECO:0007669"/>
    <property type="project" value="UniProtKB-KW"/>
</dbReference>
<dbReference type="GO" id="GO:0043722">
    <property type="term" value="F:4-hydroxyphenylacetate decarboxylase activity"/>
    <property type="evidence" value="ECO:0007669"/>
    <property type="project" value="UniProtKB-EC"/>
</dbReference>
<dbReference type="GO" id="GO:0046872">
    <property type="term" value="F:metal ion binding"/>
    <property type="evidence" value="ECO:0007669"/>
    <property type="project" value="UniProtKB-KW"/>
</dbReference>
<dbReference type="Gene3D" id="2.20.70.100">
    <property type="match status" value="2"/>
</dbReference>
<dbReference type="InterPro" id="IPR041125">
    <property type="entry name" value="4HPAD_g_N"/>
</dbReference>
<dbReference type="InterPro" id="IPR053727">
    <property type="entry name" value="HPA_decarboxylase_ss_sf"/>
</dbReference>
<dbReference type="InterPro" id="IPR040923">
    <property type="entry name" value="HpdC_C"/>
</dbReference>
<dbReference type="NCBIfam" id="NF033716">
    <property type="entry name" value="glycyl_HPDL_Sma"/>
    <property type="match status" value="1"/>
</dbReference>
<dbReference type="Pfam" id="PF18671">
    <property type="entry name" value="4HPAD_g_N"/>
    <property type="match status" value="1"/>
</dbReference>
<dbReference type="Pfam" id="PF18524">
    <property type="entry name" value="HPIP_like"/>
    <property type="match status" value="1"/>
</dbReference>
<name>HPDS_CLODI</name>
<sequence>MRKHSDCMNFCAVDATKGICRLSKQMINLDDAACPEIKVMPKCKNCKNFVEANDEGIGKCVGLEKEDWVYSTLNAITCEGHVFNE</sequence>
<protein>
    <recommendedName>
        <fullName evidence="6">4-hydroxyphenylacetate decarboxylase small subunit</fullName>
        <shortName>HPA decarboxylase small subunit</shortName>
        <ecNumber evidence="2 4">4.1.1.83</ecNumber>
    </recommendedName>
    <alternativeName>
        <fullName evidence="1">4-hydroxyphenylacetate decarboxylase gamma subunit</fullName>
    </alternativeName>
    <alternativeName>
        <fullName evidence="5">p-hydroxyphenylacetate decarboxylase small subunit</fullName>
    </alternativeName>
</protein>
<accession>Q84F15</accession>
<organism>
    <name type="scientific">Clostridioides difficile</name>
    <name type="common">Peptoclostridium difficile</name>
    <dbReference type="NCBI Taxonomy" id="1496"/>
    <lineage>
        <taxon>Bacteria</taxon>
        <taxon>Bacillati</taxon>
        <taxon>Bacillota</taxon>
        <taxon>Clostridia</taxon>
        <taxon>Peptostreptococcales</taxon>
        <taxon>Peptostreptococcaceae</taxon>
        <taxon>Clostridioides</taxon>
    </lineage>
</organism>
<evidence type="ECO:0000250" key="1">
    <source>
        <dbReference type="UniProtKB" id="Q38HX3"/>
    </source>
</evidence>
<evidence type="ECO:0000269" key="2">
    <source>
    </source>
</evidence>
<evidence type="ECO:0000269" key="3">
    <source>
    </source>
</evidence>
<evidence type="ECO:0000269" key="4">
    <source>
    </source>
</evidence>
<evidence type="ECO:0000303" key="5">
    <source>
    </source>
</evidence>
<evidence type="ECO:0000303" key="6">
    <source>
    </source>
</evidence>
<evidence type="ECO:0000305" key="7"/>
<evidence type="ECO:0000305" key="8">
    <source>
    </source>
</evidence>
<evidence type="ECO:0000305" key="9">
    <source>
    </source>
</evidence>
<evidence type="ECO:0000312" key="10">
    <source>
        <dbReference type="EMBL" id="CAD65890.1"/>
    </source>
</evidence>
<keyword id="KW-0004">4Fe-4S</keyword>
<keyword id="KW-0408">Iron</keyword>
<keyword id="KW-0411">Iron-sulfur</keyword>
<keyword id="KW-0456">Lyase</keyword>
<keyword id="KW-0479">Metal-binding</keyword>